<organism>
    <name type="scientific">Rhizobium rhizogenes (strain K84 / ATCC BAA-868)</name>
    <name type="common">Agrobacterium radiobacter</name>
    <dbReference type="NCBI Taxonomy" id="311403"/>
    <lineage>
        <taxon>Bacteria</taxon>
        <taxon>Pseudomonadati</taxon>
        <taxon>Pseudomonadota</taxon>
        <taxon>Alphaproteobacteria</taxon>
        <taxon>Hyphomicrobiales</taxon>
        <taxon>Rhizobiaceae</taxon>
        <taxon>Rhizobium/Agrobacterium group</taxon>
        <taxon>Rhizobium</taxon>
    </lineage>
</organism>
<name>RL20_RHIR8</name>
<comment type="function">
    <text evidence="1">Binds directly to 23S ribosomal RNA and is necessary for the in vitro assembly process of the 50S ribosomal subunit. It is not involved in the protein synthesizing functions of that subunit.</text>
</comment>
<comment type="similarity">
    <text evidence="1">Belongs to the bacterial ribosomal protein bL20 family.</text>
</comment>
<protein>
    <recommendedName>
        <fullName evidence="1">Large ribosomal subunit protein bL20</fullName>
    </recommendedName>
    <alternativeName>
        <fullName evidence="2">50S ribosomal protein L20</fullName>
    </alternativeName>
</protein>
<sequence>MARVKRGVTSHAKHKKVLKQARGFYGRRKNTIRTAKAAVDRSKQYAYRDRKVNKRNFRALWIQRINAAVREHGLTYGRFIDGLTKAGIEVDRKVLSDMAIHETEAFGALVAASKKALEYLKDAGTKNEFEAAVN</sequence>
<keyword id="KW-0687">Ribonucleoprotein</keyword>
<keyword id="KW-0689">Ribosomal protein</keyword>
<keyword id="KW-0694">RNA-binding</keyword>
<keyword id="KW-0699">rRNA-binding</keyword>
<reference key="1">
    <citation type="journal article" date="2009" name="J. Bacteriol.">
        <title>Genome sequences of three Agrobacterium biovars help elucidate the evolution of multichromosome genomes in bacteria.</title>
        <authorList>
            <person name="Slater S.C."/>
            <person name="Goldman B.S."/>
            <person name="Goodner B."/>
            <person name="Setubal J.C."/>
            <person name="Farrand S.K."/>
            <person name="Nester E.W."/>
            <person name="Burr T.J."/>
            <person name="Banta L."/>
            <person name="Dickerman A.W."/>
            <person name="Paulsen I."/>
            <person name="Otten L."/>
            <person name="Suen G."/>
            <person name="Welch R."/>
            <person name="Almeida N.F."/>
            <person name="Arnold F."/>
            <person name="Burton O.T."/>
            <person name="Du Z."/>
            <person name="Ewing A."/>
            <person name="Godsy E."/>
            <person name="Heisel S."/>
            <person name="Houmiel K.L."/>
            <person name="Jhaveri J."/>
            <person name="Lu J."/>
            <person name="Miller N.M."/>
            <person name="Norton S."/>
            <person name="Chen Q."/>
            <person name="Phoolcharoen W."/>
            <person name="Ohlin V."/>
            <person name="Ondrusek D."/>
            <person name="Pride N."/>
            <person name="Stricklin S.L."/>
            <person name="Sun J."/>
            <person name="Wheeler C."/>
            <person name="Wilson L."/>
            <person name="Zhu H."/>
            <person name="Wood D.W."/>
        </authorList>
    </citation>
    <scope>NUCLEOTIDE SEQUENCE [LARGE SCALE GENOMIC DNA]</scope>
    <source>
        <strain>K84 / ATCC BAA-868</strain>
    </source>
</reference>
<proteinExistence type="inferred from homology"/>
<feature type="chain" id="PRO_1000193929" description="Large ribosomal subunit protein bL20">
    <location>
        <begin position="1"/>
        <end position="134"/>
    </location>
</feature>
<evidence type="ECO:0000255" key="1">
    <source>
        <dbReference type="HAMAP-Rule" id="MF_00382"/>
    </source>
</evidence>
<evidence type="ECO:0000305" key="2"/>
<dbReference type="EMBL" id="CP000628">
    <property type="protein sequence ID" value="ACM25134.1"/>
    <property type="molecule type" value="Genomic_DNA"/>
</dbReference>
<dbReference type="RefSeq" id="WP_007692608.1">
    <property type="nucleotide sequence ID" value="NC_011985.1"/>
</dbReference>
<dbReference type="SMR" id="B9J7G2"/>
<dbReference type="STRING" id="311403.Arad_0441"/>
<dbReference type="GeneID" id="86850778"/>
<dbReference type="KEGG" id="ara:Arad_0441"/>
<dbReference type="eggNOG" id="COG0292">
    <property type="taxonomic scope" value="Bacteria"/>
</dbReference>
<dbReference type="HOGENOM" id="CLU_123265_0_1_5"/>
<dbReference type="Proteomes" id="UP000001600">
    <property type="component" value="Chromosome 1"/>
</dbReference>
<dbReference type="GO" id="GO:1990904">
    <property type="term" value="C:ribonucleoprotein complex"/>
    <property type="evidence" value="ECO:0007669"/>
    <property type="project" value="UniProtKB-KW"/>
</dbReference>
<dbReference type="GO" id="GO:0005840">
    <property type="term" value="C:ribosome"/>
    <property type="evidence" value="ECO:0007669"/>
    <property type="project" value="UniProtKB-KW"/>
</dbReference>
<dbReference type="GO" id="GO:0019843">
    <property type="term" value="F:rRNA binding"/>
    <property type="evidence" value="ECO:0007669"/>
    <property type="project" value="UniProtKB-UniRule"/>
</dbReference>
<dbReference type="GO" id="GO:0003735">
    <property type="term" value="F:structural constituent of ribosome"/>
    <property type="evidence" value="ECO:0007669"/>
    <property type="project" value="InterPro"/>
</dbReference>
<dbReference type="GO" id="GO:0000027">
    <property type="term" value="P:ribosomal large subunit assembly"/>
    <property type="evidence" value="ECO:0007669"/>
    <property type="project" value="UniProtKB-UniRule"/>
</dbReference>
<dbReference type="GO" id="GO:0006412">
    <property type="term" value="P:translation"/>
    <property type="evidence" value="ECO:0007669"/>
    <property type="project" value="InterPro"/>
</dbReference>
<dbReference type="CDD" id="cd07026">
    <property type="entry name" value="Ribosomal_L20"/>
    <property type="match status" value="1"/>
</dbReference>
<dbReference type="FunFam" id="1.10.1900.20:FF:000001">
    <property type="entry name" value="50S ribosomal protein L20"/>
    <property type="match status" value="1"/>
</dbReference>
<dbReference type="Gene3D" id="6.10.160.10">
    <property type="match status" value="1"/>
</dbReference>
<dbReference type="Gene3D" id="1.10.1900.20">
    <property type="entry name" value="Ribosomal protein L20"/>
    <property type="match status" value="1"/>
</dbReference>
<dbReference type="HAMAP" id="MF_00382">
    <property type="entry name" value="Ribosomal_bL20"/>
    <property type="match status" value="1"/>
</dbReference>
<dbReference type="InterPro" id="IPR005813">
    <property type="entry name" value="Ribosomal_bL20"/>
</dbReference>
<dbReference type="InterPro" id="IPR049946">
    <property type="entry name" value="RIBOSOMAL_L20_CS"/>
</dbReference>
<dbReference type="InterPro" id="IPR035566">
    <property type="entry name" value="Ribosomal_protein_bL20_C"/>
</dbReference>
<dbReference type="NCBIfam" id="TIGR01032">
    <property type="entry name" value="rplT_bact"/>
    <property type="match status" value="1"/>
</dbReference>
<dbReference type="PANTHER" id="PTHR10986">
    <property type="entry name" value="39S RIBOSOMAL PROTEIN L20"/>
    <property type="match status" value="1"/>
</dbReference>
<dbReference type="Pfam" id="PF00453">
    <property type="entry name" value="Ribosomal_L20"/>
    <property type="match status" value="1"/>
</dbReference>
<dbReference type="PRINTS" id="PR00062">
    <property type="entry name" value="RIBOSOMALL20"/>
</dbReference>
<dbReference type="SUPFAM" id="SSF74731">
    <property type="entry name" value="Ribosomal protein L20"/>
    <property type="match status" value="1"/>
</dbReference>
<dbReference type="PROSITE" id="PS00937">
    <property type="entry name" value="RIBOSOMAL_L20"/>
    <property type="match status" value="1"/>
</dbReference>
<gene>
    <name evidence="1" type="primary">rplT</name>
    <name type="ordered locus">Arad_0441</name>
</gene>
<accession>B9J7G2</accession>